<keyword id="KW-0203">Cytokinin biosynthesis</keyword>
<keyword id="KW-0932">Cytokinin signaling pathway</keyword>
<keyword id="KW-0963">Cytoplasm</keyword>
<keyword id="KW-0539">Nucleus</keyword>
<keyword id="KW-1185">Reference proteome</keyword>
<accession>Q9CA45</accession>
<evidence type="ECO:0000256" key="1">
    <source>
        <dbReference type="SAM" id="MobiDB-lite"/>
    </source>
</evidence>
<evidence type="ECO:0000269" key="2">
    <source>
    </source>
</evidence>
<evidence type="ECO:0000269" key="3">
    <source>
    </source>
</evidence>
<evidence type="ECO:0000303" key="4">
    <source>
    </source>
</evidence>
<evidence type="ECO:0000305" key="5"/>
<evidence type="ECO:0000305" key="6">
    <source>
    </source>
</evidence>
<evidence type="ECO:0000312" key="7">
    <source>
        <dbReference type="Araport" id="AT1G68870"/>
    </source>
</evidence>
<evidence type="ECO:0000312" key="8">
    <source>
        <dbReference type="EMBL" id="AAG52031.1"/>
    </source>
</evidence>
<name>SOFL2_ARATH</name>
<sequence>MESPRIHGGAEEKSSCESGWTMYIEDTFHGNHHSEVVYEEEDDGFSVKEVDDDGDGDEDDDDDDDDDSSNNESDDSMTSDASSWPSTHQPPRSTKNHAAAKNSNAKQVNNQTENRVRDRFSDEGEESELKARTRTTAASRVKVSKTK</sequence>
<reference key="1">
    <citation type="journal article" date="2000" name="Nature">
        <title>Sequence and analysis of chromosome 1 of the plant Arabidopsis thaliana.</title>
        <authorList>
            <person name="Theologis A."/>
            <person name="Ecker J.R."/>
            <person name="Palm C.J."/>
            <person name="Federspiel N.A."/>
            <person name="Kaul S."/>
            <person name="White O."/>
            <person name="Alonso J."/>
            <person name="Altafi H."/>
            <person name="Araujo R."/>
            <person name="Bowman C.L."/>
            <person name="Brooks S.Y."/>
            <person name="Buehler E."/>
            <person name="Chan A."/>
            <person name="Chao Q."/>
            <person name="Chen H."/>
            <person name="Cheuk R.F."/>
            <person name="Chin C.W."/>
            <person name="Chung M.K."/>
            <person name="Conn L."/>
            <person name="Conway A.B."/>
            <person name="Conway A.R."/>
            <person name="Creasy T.H."/>
            <person name="Dewar K."/>
            <person name="Dunn P."/>
            <person name="Etgu P."/>
            <person name="Feldblyum T.V."/>
            <person name="Feng J.-D."/>
            <person name="Fong B."/>
            <person name="Fujii C.Y."/>
            <person name="Gill J.E."/>
            <person name="Goldsmith A.D."/>
            <person name="Haas B."/>
            <person name="Hansen N.F."/>
            <person name="Hughes B."/>
            <person name="Huizar L."/>
            <person name="Hunter J.L."/>
            <person name="Jenkins J."/>
            <person name="Johnson-Hopson C."/>
            <person name="Khan S."/>
            <person name="Khaykin E."/>
            <person name="Kim C.J."/>
            <person name="Koo H.L."/>
            <person name="Kremenetskaia I."/>
            <person name="Kurtz D.B."/>
            <person name="Kwan A."/>
            <person name="Lam B."/>
            <person name="Langin-Hooper S."/>
            <person name="Lee A."/>
            <person name="Lee J.M."/>
            <person name="Lenz C.A."/>
            <person name="Li J.H."/>
            <person name="Li Y.-P."/>
            <person name="Lin X."/>
            <person name="Liu S.X."/>
            <person name="Liu Z.A."/>
            <person name="Luros J.S."/>
            <person name="Maiti R."/>
            <person name="Marziali A."/>
            <person name="Militscher J."/>
            <person name="Miranda M."/>
            <person name="Nguyen M."/>
            <person name="Nierman W.C."/>
            <person name="Osborne B.I."/>
            <person name="Pai G."/>
            <person name="Peterson J."/>
            <person name="Pham P.K."/>
            <person name="Rizzo M."/>
            <person name="Rooney T."/>
            <person name="Rowley D."/>
            <person name="Sakano H."/>
            <person name="Salzberg S.L."/>
            <person name="Schwartz J.R."/>
            <person name="Shinn P."/>
            <person name="Southwick A.M."/>
            <person name="Sun H."/>
            <person name="Tallon L.J."/>
            <person name="Tambunga G."/>
            <person name="Toriumi M.J."/>
            <person name="Town C.D."/>
            <person name="Utterback T."/>
            <person name="Van Aken S."/>
            <person name="Vaysberg M."/>
            <person name="Vysotskaia V.S."/>
            <person name="Walker M."/>
            <person name="Wu D."/>
            <person name="Yu G."/>
            <person name="Fraser C.M."/>
            <person name="Venter J.C."/>
            <person name="Davis R.W."/>
        </authorList>
    </citation>
    <scope>NUCLEOTIDE SEQUENCE [LARGE SCALE GENOMIC DNA]</scope>
    <source>
        <strain>cv. Columbia</strain>
    </source>
</reference>
<reference key="2">
    <citation type="journal article" date="2017" name="Plant J.">
        <title>Araport11: a complete reannotation of the Arabidopsis thaliana reference genome.</title>
        <authorList>
            <person name="Cheng C.Y."/>
            <person name="Krishnakumar V."/>
            <person name="Chan A.P."/>
            <person name="Thibaud-Nissen F."/>
            <person name="Schobel S."/>
            <person name="Town C.D."/>
        </authorList>
    </citation>
    <scope>GENOME REANNOTATION</scope>
    <source>
        <strain>cv. Columbia</strain>
    </source>
</reference>
<reference key="3">
    <citation type="submission" date="2004-06" db="EMBL/GenBank/DDBJ databases">
        <title>Arabidopsis ORF clones.</title>
        <authorList>
            <person name="Cheuk R.F."/>
            <person name="Chen H."/>
            <person name="Kim C.J."/>
            <person name="Shinn P."/>
            <person name="Ecker J.R."/>
        </authorList>
    </citation>
    <scope>NUCLEOTIDE SEQUENCE [LARGE SCALE MRNA]</scope>
    <source>
        <strain>cv. Columbia</strain>
    </source>
</reference>
<reference key="4">
    <citation type="journal article" date="2006" name="Plant J.">
        <title>Over-expression of SOB5 suggests the involvement of a novel plant protein in cytokinin-mediated development.</title>
        <authorList>
            <person name="Zhang J."/>
            <person name="Wrage E.L."/>
            <person name="Vankova R."/>
            <person name="Malbeck J."/>
            <person name="Neff M.M."/>
        </authorList>
    </citation>
    <scope>GENE FAMILY</scope>
    <scope>NOMENCLATURE</scope>
    <source>
        <strain>cv. Columbia</strain>
    </source>
</reference>
<reference key="5">
    <citation type="journal article" date="2009" name="PLoS ONE">
        <title>AtSOFL1 and AtSOFL2 act redundantly as positive modulators of the endogenous content of specific cytokinins in Arabidopsis.</title>
        <authorList>
            <person name="Zhang J."/>
            <person name="Vankova R."/>
            <person name="Malbeck J."/>
            <person name="Dobrev P.I."/>
            <person name="Xu Y."/>
            <person name="Chong K."/>
            <person name="Neff M.M."/>
        </authorList>
    </citation>
    <scope>FUNCTION</scope>
    <scope>MUTAGENESIS OF THR-21 AND ASP-80</scope>
    <scope>DISRUPTION PHENOTYPE</scope>
    <scope>TISSUE SPECIFICITY</scope>
    <scope>DEVELOPMENTAL STAGE</scope>
    <source>
        <strain>cv. Columbia</strain>
    </source>
</reference>
<reference key="6">
    <citation type="journal article" date="2018" name="G3 (Bethesda)">
        <title>Synopsis of the SOFL plant-specific gene family.</title>
        <authorList>
            <person name="Tayengwa R."/>
            <person name="Zhao J."/>
            <person name="Pierce C.F."/>
            <person name="Werner B.E."/>
            <person name="Neff M.M."/>
        </authorList>
    </citation>
    <scope>FUNCTION</scope>
    <scope>MUTAGENESIS OF THR-21 AND ASP-80</scope>
    <scope>SUBCELLULAR LOCATION</scope>
    <scope>TISSUE SPECIFICITY</scope>
    <scope>GENE FAMILY</scope>
    <scope>NOMENCLATURE</scope>
    <source>
        <strain>cv. Columbia</strain>
    </source>
</reference>
<protein>
    <recommendedName>
        <fullName evidence="4">Protein SOB FIVE-LIKE 2</fullName>
        <shortName evidence="4">AtSOFL2</shortName>
    </recommendedName>
</protein>
<feature type="chain" id="PRO_0000450250" description="Protein SOB FIVE-LIKE 2">
    <location>
        <begin position="1"/>
        <end position="147"/>
    </location>
</feature>
<feature type="region of interest" description="Disordered" evidence="1">
    <location>
        <begin position="32"/>
        <end position="147"/>
    </location>
</feature>
<feature type="short sequence motif" description="SOFL-A" evidence="6">
    <location>
        <begin position="18"/>
        <end position="23"/>
    </location>
</feature>
<feature type="short sequence motif" description="SOFL-B" evidence="6">
    <location>
        <begin position="76"/>
        <end position="85"/>
    </location>
</feature>
<feature type="compositionally biased region" description="Acidic residues" evidence="1">
    <location>
        <begin position="37"/>
        <end position="77"/>
    </location>
</feature>
<feature type="compositionally biased region" description="Polar residues" evidence="1">
    <location>
        <begin position="78"/>
        <end position="93"/>
    </location>
</feature>
<feature type="compositionally biased region" description="Low complexity" evidence="1">
    <location>
        <begin position="96"/>
        <end position="106"/>
    </location>
</feature>
<feature type="compositionally biased region" description="Basic and acidic residues" evidence="1">
    <location>
        <begin position="114"/>
        <end position="131"/>
    </location>
</feature>
<feature type="mutagenesis site" description="Impaired function in cytokinin-mediated development; when associated with N-80." evidence="2 3">
    <original>T</original>
    <variation>I</variation>
    <location>
        <position position="21"/>
    </location>
</feature>
<feature type="mutagenesis site" description="Impaired function in cytokinin-mediated development; when associated with I-21." evidence="2 3">
    <original>D</original>
    <variation>N</variation>
    <location>
        <position position="80"/>
    </location>
</feature>
<dbReference type="EMBL" id="AC011914">
    <property type="protein sequence ID" value="AAG52031.1"/>
    <property type="molecule type" value="Genomic_DNA"/>
</dbReference>
<dbReference type="EMBL" id="CP002684">
    <property type="protein sequence ID" value="AEE34852.1"/>
    <property type="molecule type" value="Genomic_DNA"/>
</dbReference>
<dbReference type="EMBL" id="BT014768">
    <property type="protein sequence ID" value="AAT41751.1"/>
    <property type="molecule type" value="mRNA"/>
</dbReference>
<dbReference type="EMBL" id="BT015000">
    <property type="protein sequence ID" value="AAT70451.1"/>
    <property type="molecule type" value="mRNA"/>
</dbReference>
<dbReference type="RefSeq" id="NP_177053.1">
    <property type="nucleotide sequence ID" value="NM_105560.3"/>
</dbReference>
<dbReference type="SMR" id="Q9CA45"/>
<dbReference type="STRING" id="3702.Q9CA45"/>
<dbReference type="iPTMnet" id="Q9CA45"/>
<dbReference type="PaxDb" id="3702-AT1G68870.1"/>
<dbReference type="ProteomicsDB" id="183353"/>
<dbReference type="EnsemblPlants" id="AT1G68870.1">
    <property type="protein sequence ID" value="AT1G68870.1"/>
    <property type="gene ID" value="AT1G68870"/>
</dbReference>
<dbReference type="GeneID" id="843219"/>
<dbReference type="Gramene" id="AT1G68870.1">
    <property type="protein sequence ID" value="AT1G68870.1"/>
    <property type="gene ID" value="AT1G68870"/>
</dbReference>
<dbReference type="KEGG" id="ath:AT1G68870"/>
<dbReference type="Araport" id="AT1G68870"/>
<dbReference type="TAIR" id="AT1G68870">
    <property type="gene designation" value="SOFL2"/>
</dbReference>
<dbReference type="HOGENOM" id="CLU_1858027_0_0_1"/>
<dbReference type="InParanoid" id="Q9CA45"/>
<dbReference type="OMA" id="SWPSTHQ"/>
<dbReference type="OrthoDB" id="1096140at2759"/>
<dbReference type="PhylomeDB" id="Q9CA45"/>
<dbReference type="PRO" id="PR:Q9CA45"/>
<dbReference type="Proteomes" id="UP000006548">
    <property type="component" value="Chromosome 1"/>
</dbReference>
<dbReference type="ExpressionAtlas" id="Q9CA45">
    <property type="expression patterns" value="baseline and differential"/>
</dbReference>
<dbReference type="GO" id="GO:0005737">
    <property type="term" value="C:cytoplasm"/>
    <property type="evidence" value="ECO:0000314"/>
    <property type="project" value="UniProtKB"/>
</dbReference>
<dbReference type="GO" id="GO:0005634">
    <property type="term" value="C:nucleus"/>
    <property type="evidence" value="ECO:0000314"/>
    <property type="project" value="UniProtKB"/>
</dbReference>
<dbReference type="GO" id="GO:0009691">
    <property type="term" value="P:cytokinin biosynthetic process"/>
    <property type="evidence" value="ECO:0007669"/>
    <property type="project" value="UniProtKB-KW"/>
</dbReference>
<dbReference type="GO" id="GO:0009690">
    <property type="term" value="P:cytokinin metabolic process"/>
    <property type="evidence" value="ECO:0000315"/>
    <property type="project" value="TAIR"/>
</dbReference>
<dbReference type="GO" id="GO:0009736">
    <property type="term" value="P:cytokinin-activated signaling pathway"/>
    <property type="evidence" value="ECO:0000315"/>
    <property type="project" value="UniProtKB"/>
</dbReference>
<dbReference type="InterPro" id="IPR044670">
    <property type="entry name" value="SOFL"/>
</dbReference>
<dbReference type="PANTHER" id="PTHR33347">
    <property type="entry name" value="OSJNBA0091C07.3 PROTEIN"/>
    <property type="match status" value="1"/>
</dbReference>
<dbReference type="PANTHER" id="PTHR33347:SF39">
    <property type="entry name" value="PROTEIN SOB FIVE-LIKE 2"/>
    <property type="match status" value="1"/>
</dbReference>
<proteinExistence type="evidence at protein level"/>
<organism>
    <name type="scientific">Arabidopsis thaliana</name>
    <name type="common">Mouse-ear cress</name>
    <dbReference type="NCBI Taxonomy" id="3702"/>
    <lineage>
        <taxon>Eukaryota</taxon>
        <taxon>Viridiplantae</taxon>
        <taxon>Streptophyta</taxon>
        <taxon>Embryophyta</taxon>
        <taxon>Tracheophyta</taxon>
        <taxon>Spermatophyta</taxon>
        <taxon>Magnoliopsida</taxon>
        <taxon>eudicotyledons</taxon>
        <taxon>Gunneridae</taxon>
        <taxon>Pentapetalae</taxon>
        <taxon>rosids</taxon>
        <taxon>malvids</taxon>
        <taxon>Brassicales</taxon>
        <taxon>Brassicaceae</taxon>
        <taxon>Camelineae</taxon>
        <taxon>Arabidopsis</taxon>
    </lineage>
</organism>
<gene>
    <name evidence="4" type="primary">SOFL2</name>
    <name evidence="7" type="ordered locus">At1g68870</name>
    <name evidence="8" type="ORF">F14K14.2</name>
</gene>
<comment type="function">
    <text evidence="2 3">Involved in cytokinin-mediated development (PubMed:20011053, PubMed:29467189). Together with SOFL2, triggers the endogenous content of specific bioactive cytokinins derived from the biosynthetic intermediates trans-zeatin riboside monophosphate (tZRMP) and N(6)-(Delta(2)-isopentenyl)adenosine monophosphate (iPRMP) such as N-glucosides trans-zeatin 7-glucoside (tZ7G), cis-zeatin 7-glucoside (cZ7G) and N(6)-(Delta(2)-isopentenyl)adenine 7-glucoside (iP7G) (PubMed:20011053).</text>
</comment>
<comment type="subcellular location">
    <subcellularLocation>
        <location evidence="3">Cytoplasm</location>
    </subcellularLocation>
    <subcellularLocation>
        <location evidence="3">Nucleus</location>
    </subcellularLocation>
</comment>
<comment type="tissue specificity">
    <text evidence="2 3">Predominantly expressed in the vascular tissues of seedlings, developing leaves, flowers and siliques, but barely detectable in roots and stems.</text>
</comment>
<comment type="developmental stage">
    <text evidence="2">In seedlings, strong levels in the hydathode region of cotyledons as well as in the upper part of hypocotyls and weak content in the vascular tissue of cotyledons (PubMed:20011053). In developing leaves, strongly expressed in the midrib of leaf veins, but weak levels in the hydathode regions (PubMed:20011053). In developing flower buds, accumulates in pistil tips and the vascular tissue of stamens and sepals (PubMed:20011053). In mature flowers, detected in the vascular bundles between the two anther locules, the central vascular cylinders of the filaments, vascular tissues of tips of the pistils, and sepal vascular tissue (PubMed:20011053). Also present in tips and bases of developing siliques, and progressively restricted to the vascular tissues at the silique tips (PubMed:20011053).</text>
</comment>
<comment type="domain">
    <text evidence="2">Domains SOFL-A and SOFL-B are required for function in cytokinin-mediated development.</text>
</comment>
<comment type="disruption phenotype">
    <text evidence="2">No obvious developmental defects (PubMed:20011053). Plants missing both SOLF1 and SOLF2 have reduced endogenous cytokinin levels and accumulate lower levels of trans-zeatin riboside monophosphate (tZRMP) and N(6)-(Delta(2)-isopentenyl)adenosine monophosphate (iPRMP), biosynthetic intermediates of bioactive cytokinins as well as decreased response to exogenous cytokinin in both callus-formation and inhibition-of-hypocotyl-elongation assays (PubMed:20011053).</text>
</comment>
<comment type="similarity">
    <text evidence="5">Belongs to the SOFL plant protein family.</text>
</comment>